<protein>
    <recommendedName>
        <fullName evidence="1">Ribosome-binding factor A</fullName>
    </recommendedName>
</protein>
<keyword id="KW-0963">Cytoplasm</keyword>
<keyword id="KW-0690">Ribosome biogenesis</keyword>
<feature type="chain" id="PRO_1000000208" description="Ribosome-binding factor A">
    <location>
        <begin position="1"/>
        <end position="149"/>
    </location>
</feature>
<feature type="region of interest" description="Disordered" evidence="2">
    <location>
        <begin position="125"/>
        <end position="149"/>
    </location>
</feature>
<feature type="compositionally biased region" description="Acidic residues" evidence="2">
    <location>
        <begin position="131"/>
        <end position="143"/>
    </location>
</feature>
<name>RBFA_SHESW</name>
<reference key="1">
    <citation type="submission" date="2006-12" db="EMBL/GenBank/DDBJ databases">
        <title>Complete sequence of Shewanella sp. W3-18-1.</title>
        <authorList>
            <consortium name="US DOE Joint Genome Institute"/>
            <person name="Copeland A."/>
            <person name="Lucas S."/>
            <person name="Lapidus A."/>
            <person name="Barry K."/>
            <person name="Detter J.C."/>
            <person name="Glavina del Rio T."/>
            <person name="Hammon N."/>
            <person name="Israni S."/>
            <person name="Dalin E."/>
            <person name="Tice H."/>
            <person name="Pitluck S."/>
            <person name="Chain P."/>
            <person name="Malfatti S."/>
            <person name="Shin M."/>
            <person name="Vergez L."/>
            <person name="Schmutz J."/>
            <person name="Larimer F."/>
            <person name="Land M."/>
            <person name="Hauser L."/>
            <person name="Kyrpides N."/>
            <person name="Lykidis A."/>
            <person name="Tiedje J."/>
            <person name="Richardson P."/>
        </authorList>
    </citation>
    <scope>NUCLEOTIDE SEQUENCE [LARGE SCALE GENOMIC DNA]</scope>
    <source>
        <strain>W3-18-1</strain>
    </source>
</reference>
<organism>
    <name type="scientific">Shewanella sp. (strain W3-18-1)</name>
    <dbReference type="NCBI Taxonomy" id="351745"/>
    <lineage>
        <taxon>Bacteria</taxon>
        <taxon>Pseudomonadati</taxon>
        <taxon>Pseudomonadota</taxon>
        <taxon>Gammaproteobacteria</taxon>
        <taxon>Alteromonadales</taxon>
        <taxon>Shewanellaceae</taxon>
        <taxon>Shewanella</taxon>
    </lineage>
</organism>
<evidence type="ECO:0000255" key="1">
    <source>
        <dbReference type="HAMAP-Rule" id="MF_00003"/>
    </source>
</evidence>
<evidence type="ECO:0000256" key="2">
    <source>
        <dbReference type="SAM" id="MobiDB-lite"/>
    </source>
</evidence>
<accession>A1RGX6</accession>
<comment type="function">
    <text evidence="1">One of several proteins that assist in the late maturation steps of the functional core of the 30S ribosomal subunit. Associates with free 30S ribosomal subunits (but not with 30S subunits that are part of 70S ribosomes or polysomes). Required for efficient processing of 16S rRNA. May interact with the 5'-terminal helix region of 16S rRNA.</text>
</comment>
<comment type="subunit">
    <text evidence="1">Monomer. Binds 30S ribosomal subunits, but not 50S ribosomal subunits or 70S ribosomes.</text>
</comment>
<comment type="subcellular location">
    <subcellularLocation>
        <location evidence="1">Cytoplasm</location>
    </subcellularLocation>
</comment>
<comment type="similarity">
    <text evidence="1">Belongs to the RbfA family.</text>
</comment>
<proteinExistence type="inferred from homology"/>
<gene>
    <name evidence="1" type="primary">rbfA</name>
    <name type="ordered locus">Sputw3181_1071</name>
</gene>
<sequence length="149" mass="16938">MAKEFSRTRRIAQQLQQELAQVLQRDMKDPRIGFVTVNDVDVSRDLSYAKVFVTFFEEDKAVVQEKLNALISAAPYIRTLVAGRMKLRVMPELRFVYDSSLVEGMRMSNLVSQVINQDKAKQQQFGSADEVLNEDEGATDDTDDTKGKD</sequence>
<dbReference type="EMBL" id="CP000503">
    <property type="protein sequence ID" value="ABM23921.1"/>
    <property type="molecule type" value="Genomic_DNA"/>
</dbReference>
<dbReference type="RefSeq" id="WP_011788444.1">
    <property type="nucleotide sequence ID" value="NC_008750.1"/>
</dbReference>
<dbReference type="SMR" id="A1RGX6"/>
<dbReference type="GeneID" id="67444446"/>
<dbReference type="KEGG" id="shw:Sputw3181_1071"/>
<dbReference type="HOGENOM" id="CLU_089475_5_0_6"/>
<dbReference type="Proteomes" id="UP000002597">
    <property type="component" value="Chromosome"/>
</dbReference>
<dbReference type="GO" id="GO:0005829">
    <property type="term" value="C:cytosol"/>
    <property type="evidence" value="ECO:0007669"/>
    <property type="project" value="TreeGrafter"/>
</dbReference>
<dbReference type="GO" id="GO:0043024">
    <property type="term" value="F:ribosomal small subunit binding"/>
    <property type="evidence" value="ECO:0007669"/>
    <property type="project" value="TreeGrafter"/>
</dbReference>
<dbReference type="GO" id="GO:0030490">
    <property type="term" value="P:maturation of SSU-rRNA"/>
    <property type="evidence" value="ECO:0007669"/>
    <property type="project" value="UniProtKB-UniRule"/>
</dbReference>
<dbReference type="FunFam" id="3.30.300.20:FF:000007">
    <property type="entry name" value="Ribosome-binding factor A"/>
    <property type="match status" value="1"/>
</dbReference>
<dbReference type="Gene3D" id="3.30.300.20">
    <property type="match status" value="1"/>
</dbReference>
<dbReference type="HAMAP" id="MF_00003">
    <property type="entry name" value="RbfA"/>
    <property type="match status" value="1"/>
</dbReference>
<dbReference type="InterPro" id="IPR015946">
    <property type="entry name" value="KH_dom-like_a/b"/>
</dbReference>
<dbReference type="InterPro" id="IPR000238">
    <property type="entry name" value="RbfA"/>
</dbReference>
<dbReference type="InterPro" id="IPR023799">
    <property type="entry name" value="RbfA_dom_sf"/>
</dbReference>
<dbReference type="InterPro" id="IPR020053">
    <property type="entry name" value="Ribosome-bd_factorA_CS"/>
</dbReference>
<dbReference type="NCBIfam" id="TIGR00082">
    <property type="entry name" value="rbfA"/>
    <property type="match status" value="1"/>
</dbReference>
<dbReference type="PANTHER" id="PTHR33515">
    <property type="entry name" value="RIBOSOME-BINDING FACTOR A, CHLOROPLASTIC-RELATED"/>
    <property type="match status" value="1"/>
</dbReference>
<dbReference type="PANTHER" id="PTHR33515:SF1">
    <property type="entry name" value="RIBOSOME-BINDING FACTOR A, CHLOROPLASTIC-RELATED"/>
    <property type="match status" value="1"/>
</dbReference>
<dbReference type="Pfam" id="PF02033">
    <property type="entry name" value="RBFA"/>
    <property type="match status" value="1"/>
</dbReference>
<dbReference type="SUPFAM" id="SSF89919">
    <property type="entry name" value="Ribosome-binding factor A, RbfA"/>
    <property type="match status" value="1"/>
</dbReference>
<dbReference type="PROSITE" id="PS01319">
    <property type="entry name" value="RBFA"/>
    <property type="match status" value="1"/>
</dbReference>